<dbReference type="EC" id="3.1.-.-" evidence="1"/>
<dbReference type="EMBL" id="CP001074">
    <property type="protein sequence ID" value="ACE90906.1"/>
    <property type="molecule type" value="Genomic_DNA"/>
</dbReference>
<dbReference type="SMR" id="B3PXX0"/>
<dbReference type="KEGG" id="rec:RHECIAT_CH0001940"/>
<dbReference type="eggNOG" id="COG0816">
    <property type="taxonomic scope" value="Bacteria"/>
</dbReference>
<dbReference type="HOGENOM" id="CLU_098240_1_1_5"/>
<dbReference type="Proteomes" id="UP000008817">
    <property type="component" value="Chromosome"/>
</dbReference>
<dbReference type="GO" id="GO:0005829">
    <property type="term" value="C:cytosol"/>
    <property type="evidence" value="ECO:0007669"/>
    <property type="project" value="TreeGrafter"/>
</dbReference>
<dbReference type="GO" id="GO:0004518">
    <property type="term" value="F:nuclease activity"/>
    <property type="evidence" value="ECO:0007669"/>
    <property type="project" value="UniProtKB-KW"/>
</dbReference>
<dbReference type="GO" id="GO:0000967">
    <property type="term" value="P:rRNA 5'-end processing"/>
    <property type="evidence" value="ECO:0007669"/>
    <property type="project" value="UniProtKB-UniRule"/>
</dbReference>
<dbReference type="CDD" id="cd16964">
    <property type="entry name" value="YqgF"/>
    <property type="match status" value="1"/>
</dbReference>
<dbReference type="Gene3D" id="3.30.420.140">
    <property type="entry name" value="YqgF/RNase H-like domain"/>
    <property type="match status" value="1"/>
</dbReference>
<dbReference type="HAMAP" id="MF_00651">
    <property type="entry name" value="Nuclease_YqgF"/>
    <property type="match status" value="1"/>
</dbReference>
<dbReference type="InterPro" id="IPR012337">
    <property type="entry name" value="RNaseH-like_sf"/>
</dbReference>
<dbReference type="InterPro" id="IPR005227">
    <property type="entry name" value="YqgF"/>
</dbReference>
<dbReference type="InterPro" id="IPR006641">
    <property type="entry name" value="YqgF/RNaseH-like_dom"/>
</dbReference>
<dbReference type="InterPro" id="IPR037027">
    <property type="entry name" value="YqgF/RNaseH-like_dom_sf"/>
</dbReference>
<dbReference type="NCBIfam" id="TIGR00250">
    <property type="entry name" value="RNAse_H_YqgF"/>
    <property type="match status" value="1"/>
</dbReference>
<dbReference type="PANTHER" id="PTHR33317">
    <property type="entry name" value="POLYNUCLEOTIDYL TRANSFERASE, RIBONUCLEASE H-LIKE SUPERFAMILY PROTEIN"/>
    <property type="match status" value="1"/>
</dbReference>
<dbReference type="PANTHER" id="PTHR33317:SF4">
    <property type="entry name" value="POLYNUCLEOTIDYL TRANSFERASE, RIBONUCLEASE H-LIKE SUPERFAMILY PROTEIN"/>
    <property type="match status" value="1"/>
</dbReference>
<dbReference type="Pfam" id="PF03652">
    <property type="entry name" value="RuvX"/>
    <property type="match status" value="1"/>
</dbReference>
<dbReference type="SMART" id="SM00732">
    <property type="entry name" value="YqgFc"/>
    <property type="match status" value="1"/>
</dbReference>
<dbReference type="SUPFAM" id="SSF53098">
    <property type="entry name" value="Ribonuclease H-like"/>
    <property type="match status" value="1"/>
</dbReference>
<gene>
    <name type="ordered locus">RHECIAT_CH0001940</name>
</gene>
<keyword id="KW-0963">Cytoplasm</keyword>
<keyword id="KW-0378">Hydrolase</keyword>
<keyword id="KW-0540">Nuclease</keyword>
<keyword id="KW-0690">Ribosome biogenesis</keyword>
<feature type="chain" id="PRO_1000131061" description="Putative pre-16S rRNA nuclease">
    <location>
        <begin position="1"/>
        <end position="164"/>
    </location>
</feature>
<protein>
    <recommendedName>
        <fullName evidence="1">Putative pre-16S rRNA nuclease</fullName>
        <ecNumber evidence="1">3.1.-.-</ecNumber>
    </recommendedName>
</protein>
<evidence type="ECO:0000255" key="1">
    <source>
        <dbReference type="HAMAP-Rule" id="MF_00651"/>
    </source>
</evidence>
<proteinExistence type="inferred from homology"/>
<comment type="function">
    <text evidence="1">Could be a nuclease involved in processing of the 5'-end of pre-16S rRNA.</text>
</comment>
<comment type="subcellular location">
    <subcellularLocation>
        <location evidence="1">Cytoplasm</location>
    </subcellularLocation>
</comment>
<comment type="similarity">
    <text evidence="1">Belongs to the YqgF nuclease family.</text>
</comment>
<reference key="1">
    <citation type="journal article" date="2010" name="Appl. Environ. Microbiol.">
        <title>Conserved symbiotic plasmid DNA sequences in the multireplicon pangenomic structure of Rhizobium etli.</title>
        <authorList>
            <person name="Gonzalez V."/>
            <person name="Acosta J.L."/>
            <person name="Santamaria R.I."/>
            <person name="Bustos P."/>
            <person name="Fernandez J.L."/>
            <person name="Hernandez Gonzalez I.L."/>
            <person name="Diaz R."/>
            <person name="Flores M."/>
            <person name="Palacios R."/>
            <person name="Mora J."/>
            <person name="Davila G."/>
        </authorList>
    </citation>
    <scope>NUCLEOTIDE SEQUENCE [LARGE SCALE GENOMIC DNA]</scope>
    <source>
        <strain>CIAT 652</strain>
    </source>
</reference>
<name>YQGF_RHIE6</name>
<organism>
    <name type="scientific">Rhizobium etli (strain CIAT 652)</name>
    <dbReference type="NCBI Taxonomy" id="491916"/>
    <lineage>
        <taxon>Bacteria</taxon>
        <taxon>Pseudomonadati</taxon>
        <taxon>Pseudomonadota</taxon>
        <taxon>Alphaproteobacteria</taxon>
        <taxon>Hyphomicrobiales</taxon>
        <taxon>Rhizobiaceae</taxon>
        <taxon>Rhizobium/Agrobacterium group</taxon>
        <taxon>Rhizobium</taxon>
    </lineage>
</organism>
<sequence>MTVLTIEEMAATLAPGQAIAGLDLGTKTIGLSMSDLGRRFATPRPVIRRAKFTIDAQALLDFAAKERVAGFVIGLPMNMDGSAGPRVQATRAFVRNMEEKTALPFVYWDERLSTVAAERTLLEMDVSRAKRAERIDSAAASFILQGALDRLSLLARSDGDEFSA</sequence>
<accession>B3PXX0</accession>